<accession>Q9D2G2</accession>
<accession>Q3UEA0</accession>
<accession>Q4FK55</accession>
<accession>Q8CIE8</accession>
<comment type="function">
    <text evidence="3 4">Dihydrolipoamide succinyltransferase (E2) component of the 2-oxoglutarate dehydrogenase complex (By similarity). The 2-oxoglutarate dehydrogenase complex catalyzes the overall conversion of 2-oxoglutarate to succinyl-CoA and CO(2) (By similarity). The 2-oxoglutarate dehydrogenase complex is mainly active in the mitochondrion. A fraction of the 2-oxoglutarate dehydrogenase complex also localizes in the nucleus and is required for lysine succinylation of histones: associates with KAT2A on chromatin and provides succinyl-CoA to histone succinyltransferase KAT2A (By similarity).</text>
</comment>
<comment type="catalytic activity">
    <reaction evidence="3">
        <text>N(6)-[(R)-dihydrolipoyl]-L-lysyl-[protein] + succinyl-CoA = N(6)-[(R)-S(8)-succinyldihydrolipoyl]-L-lysyl-[protein] + CoA</text>
        <dbReference type="Rhea" id="RHEA:15213"/>
        <dbReference type="Rhea" id="RHEA-COMP:10475"/>
        <dbReference type="Rhea" id="RHEA-COMP:20092"/>
        <dbReference type="ChEBI" id="CHEBI:57287"/>
        <dbReference type="ChEBI" id="CHEBI:57292"/>
        <dbReference type="ChEBI" id="CHEBI:83100"/>
        <dbReference type="ChEBI" id="CHEBI:83120"/>
        <dbReference type="EC" id="2.3.1.61"/>
    </reaction>
    <physiologicalReaction direction="right-to-left" evidence="3">
        <dbReference type="Rhea" id="RHEA:15215"/>
    </physiologicalReaction>
</comment>
<comment type="cofactor">
    <cofactor evidence="2">
        <name>(R)-lipoate</name>
        <dbReference type="ChEBI" id="CHEBI:83088"/>
    </cofactor>
    <text evidence="2">Binds 1 lipoyl cofactor covalently.</text>
</comment>
<comment type="pathway">
    <text>Amino-acid degradation; L-lysine degradation via saccharopine pathway; glutaryl-CoA from L-lysine: step 6/6.</text>
</comment>
<comment type="pathway">
    <text evidence="3">Carbohydrate metabolism; tricarboxylic acid cycle.</text>
</comment>
<comment type="subunit">
    <text evidence="3 7">The 2-oxoglutarate dehydrogenase complex is composed of OGDH (2-oxoglutarate dehydrogenase; E1), DLST (dihydrolipoamide succinyltransferase; E2), DLD (dihydrolipoamide dehydrogenase; E3) and the assembly factor KGD4 (PubMed:36854377). It contains multiple copies of the three enzymatic components (E1, E2 and E3). In the nucleus, the 2-oxoglutarate dehydrogenase complex associates with KAT2A. Interacts with ABHD11; this interaction maintains the functional lipoylation of the 2-oxoglutarate dehydrogenase complex (By similarity).</text>
</comment>
<comment type="interaction">
    <interactant intactId="EBI-773210">
        <id>Q9D2G2</id>
    </interactant>
    <interactant intactId="EBI-774583">
        <id>Q9QXS1</id>
        <label>Plec</label>
    </interactant>
    <organismsDiffer>false</organismsDiffer>
    <experiments>2</experiments>
</comment>
<comment type="subcellular location">
    <subcellularLocation>
        <location evidence="3">Mitochondrion matrix</location>
    </subcellularLocation>
    <subcellularLocation>
        <location evidence="3">Nucleus</location>
    </subcellularLocation>
    <text evidence="3">Mainly localizes in the mitochondrion. A small fraction localizes to the nucleus, where the 2-oxoglutarate dehydrogenase complex is required for histone succinylation.</text>
</comment>
<comment type="alternative products">
    <event type="alternative splicing"/>
    <isoform>
        <id>Q9D2G2-1</id>
        <name>1</name>
        <sequence type="displayed"/>
    </isoform>
    <isoform>
        <id>Q9D2G2-2</id>
        <name>2</name>
        <sequence type="described" ref="VSP_025015 VSP_025016"/>
    </isoform>
</comment>
<comment type="similarity">
    <text evidence="9">Belongs to the 2-oxoacid dehydrogenase family.</text>
</comment>
<feature type="transit peptide" description="Mitochondrion" evidence="1">
    <location>
        <begin position="1"/>
        <end position="68"/>
    </location>
</feature>
<feature type="chain" id="PRO_0000020473" description="Dihydrolipoyllysine-residue succinyltransferase component of 2-oxoglutarate dehydrogenase complex, mitochondrial">
    <location>
        <begin position="69"/>
        <end position="454"/>
    </location>
</feature>
<feature type="domain" description="Lipoyl-binding" evidence="5">
    <location>
        <begin position="71"/>
        <end position="145"/>
    </location>
</feature>
<feature type="region of interest" description="Disordered" evidence="6">
    <location>
        <begin position="147"/>
        <end position="227"/>
    </location>
</feature>
<feature type="compositionally biased region" description="Low complexity" evidence="6">
    <location>
        <begin position="149"/>
        <end position="163"/>
    </location>
</feature>
<feature type="compositionally biased region" description="Pro residues" evidence="6">
    <location>
        <begin position="186"/>
        <end position="197"/>
    </location>
</feature>
<feature type="compositionally biased region" description="Low complexity" evidence="6">
    <location>
        <begin position="198"/>
        <end position="217"/>
    </location>
</feature>
<feature type="active site" evidence="4">
    <location>
        <position position="425"/>
    </location>
</feature>
<feature type="active site" evidence="4">
    <location>
        <position position="429"/>
    </location>
</feature>
<feature type="modified residue" description="Phosphoserine" evidence="11">
    <location>
        <position position="82"/>
    </location>
</feature>
<feature type="modified residue" description="N6-lipoyllysine" evidence="5">
    <location>
        <position position="111"/>
    </location>
</feature>
<feature type="modified residue" description="N6-acetyllysine" evidence="12">
    <location>
        <position position="155"/>
    </location>
</feature>
<feature type="modified residue" description="N6-acetyllysine" evidence="12">
    <location>
        <position position="268"/>
    </location>
</feature>
<feature type="modified residue" description="N6-acetyllysine" evidence="12">
    <location>
        <position position="273"/>
    </location>
</feature>
<feature type="modified residue" description="N6-acetyllysine" evidence="12">
    <location>
        <position position="274"/>
    </location>
</feature>
<feature type="modified residue" description="N6-acetyllysine" evidence="12">
    <location>
        <position position="278"/>
    </location>
</feature>
<feature type="modified residue" description="N6-acetyllysine" evidence="12">
    <location>
        <position position="308"/>
    </location>
</feature>
<feature type="splice variant" id="VSP_025015" description="In isoform 2." evidence="8">
    <location>
        <begin position="1"/>
        <end position="253"/>
    </location>
</feature>
<feature type="splice variant" id="VSP_025016" description="In isoform 2." evidence="8">
    <original>EVDM</original>
    <variation>MTSL</variation>
    <location>
        <begin position="254"/>
        <end position="257"/>
    </location>
</feature>
<feature type="sequence conflict" description="In Ref. 1; BAE29011." evidence="9" ref="1">
    <original>N</original>
    <variation>S</variation>
    <location>
        <position position="276"/>
    </location>
</feature>
<dbReference type="EC" id="2.3.1.61" evidence="3"/>
<dbReference type="EMBL" id="AK019713">
    <property type="protein sequence ID" value="BAB31840.1"/>
    <property type="molecule type" value="mRNA"/>
</dbReference>
<dbReference type="EMBL" id="AK054053">
    <property type="protein sequence ID" value="BAC35637.1"/>
    <property type="molecule type" value="mRNA"/>
</dbReference>
<dbReference type="EMBL" id="AK149664">
    <property type="protein sequence ID" value="BAE29011.1"/>
    <property type="molecule type" value="mRNA"/>
</dbReference>
<dbReference type="EMBL" id="AK158877">
    <property type="protein sequence ID" value="BAE34709.1"/>
    <property type="molecule type" value="mRNA"/>
</dbReference>
<dbReference type="EMBL" id="AK168570">
    <property type="protein sequence ID" value="BAE40440.1"/>
    <property type="molecule type" value="mRNA"/>
</dbReference>
<dbReference type="EMBL" id="AK169943">
    <property type="protein sequence ID" value="BAE41472.1"/>
    <property type="molecule type" value="mRNA"/>
</dbReference>
<dbReference type="EMBL" id="CT010197">
    <property type="protein sequence ID" value="CAJ18405.1"/>
    <property type="molecule type" value="mRNA"/>
</dbReference>
<dbReference type="EMBL" id="BC006702">
    <property type="protein sequence ID" value="AAH06702.1"/>
    <property type="molecule type" value="mRNA"/>
</dbReference>
<dbReference type="EMBL" id="BC024066">
    <property type="protein sequence ID" value="AAH24066.1"/>
    <property type="molecule type" value="mRNA"/>
</dbReference>
<dbReference type="CCDS" id="CCDS26052.1">
    <molecule id="Q9D2G2-1"/>
</dbReference>
<dbReference type="RefSeq" id="NP_084501.1">
    <molecule id="Q9D2G2-1"/>
    <property type="nucleotide sequence ID" value="NM_030225.4"/>
</dbReference>
<dbReference type="SMR" id="Q9D2G2"/>
<dbReference type="BioGRID" id="219707">
    <property type="interactions" value="42"/>
</dbReference>
<dbReference type="FunCoup" id="Q9D2G2">
    <property type="interactions" value="3600"/>
</dbReference>
<dbReference type="IntAct" id="Q9D2G2">
    <property type="interactions" value="62"/>
</dbReference>
<dbReference type="MINT" id="Q9D2G2"/>
<dbReference type="STRING" id="10090.ENSMUSP00000060346"/>
<dbReference type="ChEMBL" id="CHEMBL2176822"/>
<dbReference type="GlyGen" id="Q9D2G2">
    <property type="glycosylation" value="2 sites, 1 O-linked glycan (1 site)"/>
</dbReference>
<dbReference type="iPTMnet" id="Q9D2G2"/>
<dbReference type="MetOSite" id="Q9D2G2"/>
<dbReference type="PhosphoSitePlus" id="Q9D2G2"/>
<dbReference type="SwissPalm" id="Q9D2G2"/>
<dbReference type="REPRODUCTION-2DPAGE" id="Q9D2G2"/>
<dbReference type="jPOST" id="Q9D2G2"/>
<dbReference type="PaxDb" id="10090-ENSMUSP00000060346"/>
<dbReference type="PeptideAtlas" id="Q9D2G2"/>
<dbReference type="ProteomicsDB" id="293493">
    <molecule id="Q9D2G2-1"/>
</dbReference>
<dbReference type="ProteomicsDB" id="293494">
    <molecule id="Q9D2G2-2"/>
</dbReference>
<dbReference type="Pumba" id="Q9D2G2"/>
<dbReference type="TopDownProteomics" id="Q9D2G2-1">
    <molecule id="Q9D2G2-1"/>
</dbReference>
<dbReference type="TopDownProteomics" id="Q9D2G2-2">
    <molecule id="Q9D2G2-2"/>
</dbReference>
<dbReference type="Antibodypedia" id="45">
    <property type="antibodies" value="200 antibodies from 29 providers"/>
</dbReference>
<dbReference type="DNASU" id="78920"/>
<dbReference type="Ensembl" id="ENSMUST00000053811.10">
    <molecule id="Q9D2G2-1"/>
    <property type="protein sequence ID" value="ENSMUSP00000060346.9"/>
    <property type="gene ID" value="ENSMUSG00000004789.11"/>
</dbReference>
<dbReference type="Ensembl" id="ENSMUST00000221357.2">
    <molecule id="Q9D2G2-1"/>
    <property type="protein sequence ID" value="ENSMUSP00000152664.2"/>
    <property type="gene ID" value="ENSMUSG00000004789.11"/>
</dbReference>
<dbReference type="GeneID" id="78920"/>
<dbReference type="KEGG" id="mmu:78920"/>
<dbReference type="UCSC" id="uc007ogj.2">
    <molecule id="Q9D2G2-1"/>
    <property type="organism name" value="mouse"/>
</dbReference>
<dbReference type="AGR" id="MGI:1926170"/>
<dbReference type="CTD" id="1743"/>
<dbReference type="MGI" id="MGI:1926170">
    <property type="gene designation" value="Dlst"/>
</dbReference>
<dbReference type="VEuPathDB" id="HostDB:ENSMUSG00000004789"/>
<dbReference type="eggNOG" id="KOG0559">
    <property type="taxonomic scope" value="Eukaryota"/>
</dbReference>
<dbReference type="GeneTree" id="ENSGT00930000151014"/>
<dbReference type="HOGENOM" id="CLU_016733_0_0_1"/>
<dbReference type="InParanoid" id="Q9D2G2"/>
<dbReference type="OMA" id="NMPQTAV"/>
<dbReference type="OrthoDB" id="5391403at2759"/>
<dbReference type="PhylomeDB" id="Q9D2G2"/>
<dbReference type="TreeFam" id="TF314164"/>
<dbReference type="BRENDA" id="2.3.1.61">
    <property type="organism ID" value="3474"/>
</dbReference>
<dbReference type="Reactome" id="R-MMU-6783984">
    <property type="pathway name" value="Glycine degradation"/>
</dbReference>
<dbReference type="Reactome" id="R-MMU-9853506">
    <property type="pathway name" value="OGDH complex synthesizes succinyl-CoA from 2-OG"/>
</dbReference>
<dbReference type="Reactome" id="R-MMU-9857492">
    <property type="pathway name" value="Protein lipoylation"/>
</dbReference>
<dbReference type="Reactome" id="R-MMU-9858328">
    <property type="pathway name" value="OADH complex synthesizes glutaryl-CoA from 2-OA"/>
</dbReference>
<dbReference type="UniPathway" id="UPA00223"/>
<dbReference type="UniPathway" id="UPA00868">
    <property type="reaction ID" value="UER00840"/>
</dbReference>
<dbReference type="BioGRID-ORCS" id="78920">
    <property type="hits" value="26 hits in 83 CRISPR screens"/>
</dbReference>
<dbReference type="CD-CODE" id="CE726F99">
    <property type="entry name" value="Postsynaptic density"/>
</dbReference>
<dbReference type="ChiTaRS" id="Dlst">
    <property type="organism name" value="mouse"/>
</dbReference>
<dbReference type="PRO" id="PR:Q9D2G2"/>
<dbReference type="Proteomes" id="UP000000589">
    <property type="component" value="Chromosome 12"/>
</dbReference>
<dbReference type="RNAct" id="Q9D2G2">
    <property type="molecule type" value="protein"/>
</dbReference>
<dbReference type="Bgee" id="ENSMUSG00000004789">
    <property type="expression patterns" value="Expressed in heart right ventricle and 302 other cell types or tissues"/>
</dbReference>
<dbReference type="ExpressionAtlas" id="Q9D2G2">
    <property type="expression patterns" value="baseline and differential"/>
</dbReference>
<dbReference type="GO" id="GO:0005829">
    <property type="term" value="C:cytosol"/>
    <property type="evidence" value="ECO:0007669"/>
    <property type="project" value="Ensembl"/>
</dbReference>
<dbReference type="GO" id="GO:0005759">
    <property type="term" value="C:mitochondrial matrix"/>
    <property type="evidence" value="ECO:0007669"/>
    <property type="project" value="UniProtKB-SubCell"/>
</dbReference>
<dbReference type="GO" id="GO:0005739">
    <property type="term" value="C:mitochondrion"/>
    <property type="evidence" value="ECO:0007005"/>
    <property type="project" value="MGI"/>
</dbReference>
<dbReference type="GO" id="GO:0043209">
    <property type="term" value="C:myelin sheath"/>
    <property type="evidence" value="ECO:0007005"/>
    <property type="project" value="UniProtKB"/>
</dbReference>
<dbReference type="GO" id="GO:0005654">
    <property type="term" value="C:nucleoplasm"/>
    <property type="evidence" value="ECO:0007669"/>
    <property type="project" value="Ensembl"/>
</dbReference>
<dbReference type="GO" id="GO:0005634">
    <property type="term" value="C:nucleus"/>
    <property type="evidence" value="ECO:0000250"/>
    <property type="project" value="UniProtKB"/>
</dbReference>
<dbReference type="GO" id="GO:0160167">
    <property type="term" value="C:oxoadipate dehydrogenase complex"/>
    <property type="evidence" value="ECO:0007669"/>
    <property type="project" value="Ensembl"/>
</dbReference>
<dbReference type="GO" id="GO:0045252">
    <property type="term" value="C:oxoglutarate dehydrogenase complex"/>
    <property type="evidence" value="ECO:0000250"/>
    <property type="project" value="UniProtKB"/>
</dbReference>
<dbReference type="GO" id="GO:0016746">
    <property type="term" value="F:acyltransferase activity"/>
    <property type="evidence" value="ECO:0000250"/>
    <property type="project" value="UniProtKB"/>
</dbReference>
<dbReference type="GO" id="GO:0004149">
    <property type="term" value="F:dihydrolipoyllysine-residue succinyltransferase activity"/>
    <property type="evidence" value="ECO:0000250"/>
    <property type="project" value="UniProtKB"/>
</dbReference>
<dbReference type="GO" id="GO:0006103">
    <property type="term" value="P:2-oxoglutarate metabolic process"/>
    <property type="evidence" value="ECO:0000250"/>
    <property type="project" value="UniProtKB"/>
</dbReference>
<dbReference type="GO" id="GO:0033512">
    <property type="term" value="P:L-lysine catabolic process to acetyl-CoA via saccharopine"/>
    <property type="evidence" value="ECO:0007669"/>
    <property type="project" value="UniProtKB-UniPathway"/>
</dbReference>
<dbReference type="GO" id="GO:0006104">
    <property type="term" value="P:succinyl-CoA metabolic process"/>
    <property type="evidence" value="ECO:0000250"/>
    <property type="project" value="UniProtKB"/>
</dbReference>
<dbReference type="GO" id="GO:0006099">
    <property type="term" value="P:tricarboxylic acid cycle"/>
    <property type="evidence" value="ECO:0000250"/>
    <property type="project" value="UniProtKB"/>
</dbReference>
<dbReference type="CDD" id="cd06849">
    <property type="entry name" value="lipoyl_domain"/>
    <property type="match status" value="1"/>
</dbReference>
<dbReference type="FunFam" id="2.40.50.100:FF:000033">
    <property type="entry name" value="Dihydrolipoyllysine-residue succinyltransferase component of 2-oxoglutarate dehydrogenase complex, mitochondrial"/>
    <property type="match status" value="1"/>
</dbReference>
<dbReference type="FunFam" id="3.30.559.10:FF:000006">
    <property type="entry name" value="Dihydrolipoyllysine-residue succinyltransferase component of 2-oxoglutarate dehydrogenase complex, mitochondrial"/>
    <property type="match status" value="1"/>
</dbReference>
<dbReference type="Gene3D" id="2.40.50.100">
    <property type="match status" value="1"/>
</dbReference>
<dbReference type="Gene3D" id="3.30.559.10">
    <property type="entry name" value="Chloramphenicol acetyltransferase-like domain"/>
    <property type="match status" value="1"/>
</dbReference>
<dbReference type="InterPro" id="IPR003016">
    <property type="entry name" value="2-oxoA_DH_lipoyl-BS"/>
</dbReference>
<dbReference type="InterPro" id="IPR050537">
    <property type="entry name" value="2-oxoacid_dehydrogenase"/>
</dbReference>
<dbReference type="InterPro" id="IPR001078">
    <property type="entry name" value="2-oxoacid_DH_actylTfrase"/>
</dbReference>
<dbReference type="InterPro" id="IPR000089">
    <property type="entry name" value="Biotin_lipoyl"/>
</dbReference>
<dbReference type="InterPro" id="IPR023213">
    <property type="entry name" value="CAT-like_dom_sf"/>
</dbReference>
<dbReference type="InterPro" id="IPR011053">
    <property type="entry name" value="Single_hybrid_motif"/>
</dbReference>
<dbReference type="InterPro" id="IPR006255">
    <property type="entry name" value="SucB"/>
</dbReference>
<dbReference type="NCBIfam" id="TIGR01347">
    <property type="entry name" value="sucB"/>
    <property type="match status" value="1"/>
</dbReference>
<dbReference type="PANTHER" id="PTHR43416:SF5">
    <property type="entry name" value="DIHYDROLIPOYLLYSINE-RESIDUE SUCCINYLTRANSFERASE COMPONENT OF 2-OXOGLUTARATE DEHYDROGENASE COMPLEX, MITOCHONDRIAL"/>
    <property type="match status" value="1"/>
</dbReference>
<dbReference type="PANTHER" id="PTHR43416">
    <property type="entry name" value="DIHYDROLIPOYLLYSINE-RESIDUE SUCCINYLTRANSFERASE COMPONENT OF 2-OXOGLUTARATE DEHYDROGENASE COMPLEX, MITOCHONDRIAL-RELATED"/>
    <property type="match status" value="1"/>
</dbReference>
<dbReference type="Pfam" id="PF00198">
    <property type="entry name" value="2-oxoacid_dh"/>
    <property type="match status" value="1"/>
</dbReference>
<dbReference type="Pfam" id="PF00364">
    <property type="entry name" value="Biotin_lipoyl"/>
    <property type="match status" value="1"/>
</dbReference>
<dbReference type="SUPFAM" id="SSF52777">
    <property type="entry name" value="CoA-dependent acyltransferases"/>
    <property type="match status" value="1"/>
</dbReference>
<dbReference type="SUPFAM" id="SSF51230">
    <property type="entry name" value="Single hybrid motif"/>
    <property type="match status" value="1"/>
</dbReference>
<dbReference type="PROSITE" id="PS50968">
    <property type="entry name" value="BIOTINYL_LIPOYL"/>
    <property type="match status" value="1"/>
</dbReference>
<dbReference type="PROSITE" id="PS00189">
    <property type="entry name" value="LIPOYL"/>
    <property type="match status" value="1"/>
</dbReference>
<sequence length="454" mass="48995">MLSRSRCVSRAFSRSLSAFQKGNCPLGRRSLPGVSLCRGPGYPDNRKMVINSGSVFRVRFFQTTAVCKNDVITVQTPAFAESVTEGDVRWEKAVGDAVAEDEVVCEIETDKTSVQVPSPANGIIEALLVPDGGKVEGGTPLFTLRKTGAAPAKAKPAETPAPAHKAEPAAPAAPPPPAAPVLTQMPPVPSPSQPPSSKPVSAIKPTAAPPLAEAGAAKGLRSEHREKMNRMRQRIAQRLKEAQNTCAMLTTFNEVDMSNIQEMRARHKDAFLKKHNLKLGFMSAFVKASAFALQEQPVVNAVIDDATKEVVYRDYIDISVAVATPRGLVVPVIRNVETMNYADIERTINELGEKARKNELAIEDMDGGTFTISNGGVFGSLFGTPIINPPQSAILGMHAIFDRPVAVGGKVEVRPMMYVALTYDHRLIDGREAVTFLRKIKAAVEDPRVLLLDL</sequence>
<keyword id="KW-0007">Acetylation</keyword>
<keyword id="KW-0012">Acyltransferase</keyword>
<keyword id="KW-0025">Alternative splicing</keyword>
<keyword id="KW-0903">Direct protein sequencing</keyword>
<keyword id="KW-0450">Lipoyl</keyword>
<keyword id="KW-0496">Mitochondrion</keyword>
<keyword id="KW-0539">Nucleus</keyword>
<keyword id="KW-0597">Phosphoprotein</keyword>
<keyword id="KW-1185">Reference proteome</keyword>
<keyword id="KW-0808">Transferase</keyword>
<keyword id="KW-0809">Transit peptide</keyword>
<keyword id="KW-0816">Tricarboxylic acid cycle</keyword>
<evidence type="ECO:0000250" key="1"/>
<evidence type="ECO:0000250" key="2">
    <source>
        <dbReference type="UniProtKB" id="P11179"/>
    </source>
</evidence>
<evidence type="ECO:0000250" key="3">
    <source>
        <dbReference type="UniProtKB" id="P36957"/>
    </source>
</evidence>
<evidence type="ECO:0000250" key="4">
    <source>
        <dbReference type="UniProtKB" id="Q9N0F1"/>
    </source>
</evidence>
<evidence type="ECO:0000255" key="5">
    <source>
        <dbReference type="PROSITE-ProRule" id="PRU01066"/>
    </source>
</evidence>
<evidence type="ECO:0000256" key="6">
    <source>
        <dbReference type="SAM" id="MobiDB-lite"/>
    </source>
</evidence>
<evidence type="ECO:0000269" key="7">
    <source>
    </source>
</evidence>
<evidence type="ECO:0000303" key="8">
    <source>
    </source>
</evidence>
<evidence type="ECO:0000305" key="9"/>
<evidence type="ECO:0000312" key="10">
    <source>
        <dbReference type="MGI" id="MGI:1926170"/>
    </source>
</evidence>
<evidence type="ECO:0007744" key="11">
    <source>
    </source>
</evidence>
<evidence type="ECO:0007744" key="12">
    <source>
    </source>
</evidence>
<gene>
    <name evidence="10" type="primary">Dlst</name>
</gene>
<reference key="1">
    <citation type="journal article" date="2005" name="Science">
        <title>The transcriptional landscape of the mammalian genome.</title>
        <authorList>
            <person name="Carninci P."/>
            <person name="Kasukawa T."/>
            <person name="Katayama S."/>
            <person name="Gough J."/>
            <person name="Frith M.C."/>
            <person name="Maeda N."/>
            <person name="Oyama R."/>
            <person name="Ravasi T."/>
            <person name="Lenhard B."/>
            <person name="Wells C."/>
            <person name="Kodzius R."/>
            <person name="Shimokawa K."/>
            <person name="Bajic V.B."/>
            <person name="Brenner S.E."/>
            <person name="Batalov S."/>
            <person name="Forrest A.R."/>
            <person name="Zavolan M."/>
            <person name="Davis M.J."/>
            <person name="Wilming L.G."/>
            <person name="Aidinis V."/>
            <person name="Allen J.E."/>
            <person name="Ambesi-Impiombato A."/>
            <person name="Apweiler R."/>
            <person name="Aturaliya R.N."/>
            <person name="Bailey T.L."/>
            <person name="Bansal M."/>
            <person name="Baxter L."/>
            <person name="Beisel K.W."/>
            <person name="Bersano T."/>
            <person name="Bono H."/>
            <person name="Chalk A.M."/>
            <person name="Chiu K.P."/>
            <person name="Choudhary V."/>
            <person name="Christoffels A."/>
            <person name="Clutterbuck D.R."/>
            <person name="Crowe M.L."/>
            <person name="Dalla E."/>
            <person name="Dalrymple B.P."/>
            <person name="de Bono B."/>
            <person name="Della Gatta G."/>
            <person name="di Bernardo D."/>
            <person name="Down T."/>
            <person name="Engstrom P."/>
            <person name="Fagiolini M."/>
            <person name="Faulkner G."/>
            <person name="Fletcher C.F."/>
            <person name="Fukushima T."/>
            <person name="Furuno M."/>
            <person name="Futaki S."/>
            <person name="Gariboldi M."/>
            <person name="Georgii-Hemming P."/>
            <person name="Gingeras T.R."/>
            <person name="Gojobori T."/>
            <person name="Green R.E."/>
            <person name="Gustincich S."/>
            <person name="Harbers M."/>
            <person name="Hayashi Y."/>
            <person name="Hensch T.K."/>
            <person name="Hirokawa N."/>
            <person name="Hill D."/>
            <person name="Huminiecki L."/>
            <person name="Iacono M."/>
            <person name="Ikeo K."/>
            <person name="Iwama A."/>
            <person name="Ishikawa T."/>
            <person name="Jakt M."/>
            <person name="Kanapin A."/>
            <person name="Katoh M."/>
            <person name="Kawasawa Y."/>
            <person name="Kelso J."/>
            <person name="Kitamura H."/>
            <person name="Kitano H."/>
            <person name="Kollias G."/>
            <person name="Krishnan S.P."/>
            <person name="Kruger A."/>
            <person name="Kummerfeld S.K."/>
            <person name="Kurochkin I.V."/>
            <person name="Lareau L.F."/>
            <person name="Lazarevic D."/>
            <person name="Lipovich L."/>
            <person name="Liu J."/>
            <person name="Liuni S."/>
            <person name="McWilliam S."/>
            <person name="Madan Babu M."/>
            <person name="Madera M."/>
            <person name="Marchionni L."/>
            <person name="Matsuda H."/>
            <person name="Matsuzawa S."/>
            <person name="Miki H."/>
            <person name="Mignone F."/>
            <person name="Miyake S."/>
            <person name="Morris K."/>
            <person name="Mottagui-Tabar S."/>
            <person name="Mulder N."/>
            <person name="Nakano N."/>
            <person name="Nakauchi H."/>
            <person name="Ng P."/>
            <person name="Nilsson R."/>
            <person name="Nishiguchi S."/>
            <person name="Nishikawa S."/>
            <person name="Nori F."/>
            <person name="Ohara O."/>
            <person name="Okazaki Y."/>
            <person name="Orlando V."/>
            <person name="Pang K.C."/>
            <person name="Pavan W.J."/>
            <person name="Pavesi G."/>
            <person name="Pesole G."/>
            <person name="Petrovsky N."/>
            <person name="Piazza S."/>
            <person name="Reed J."/>
            <person name="Reid J.F."/>
            <person name="Ring B.Z."/>
            <person name="Ringwald M."/>
            <person name="Rost B."/>
            <person name="Ruan Y."/>
            <person name="Salzberg S.L."/>
            <person name="Sandelin A."/>
            <person name="Schneider C."/>
            <person name="Schoenbach C."/>
            <person name="Sekiguchi K."/>
            <person name="Semple C.A."/>
            <person name="Seno S."/>
            <person name="Sessa L."/>
            <person name="Sheng Y."/>
            <person name="Shibata Y."/>
            <person name="Shimada H."/>
            <person name="Shimada K."/>
            <person name="Silva D."/>
            <person name="Sinclair B."/>
            <person name="Sperling S."/>
            <person name="Stupka E."/>
            <person name="Sugiura K."/>
            <person name="Sultana R."/>
            <person name="Takenaka Y."/>
            <person name="Taki K."/>
            <person name="Tammoja K."/>
            <person name="Tan S.L."/>
            <person name="Tang S."/>
            <person name="Taylor M.S."/>
            <person name="Tegner J."/>
            <person name="Teichmann S.A."/>
            <person name="Ueda H.R."/>
            <person name="van Nimwegen E."/>
            <person name="Verardo R."/>
            <person name="Wei C.L."/>
            <person name="Yagi K."/>
            <person name="Yamanishi H."/>
            <person name="Zabarovsky E."/>
            <person name="Zhu S."/>
            <person name="Zimmer A."/>
            <person name="Hide W."/>
            <person name="Bult C."/>
            <person name="Grimmond S.M."/>
            <person name="Teasdale R.D."/>
            <person name="Liu E.T."/>
            <person name="Brusic V."/>
            <person name="Quackenbush J."/>
            <person name="Wahlestedt C."/>
            <person name="Mattick J.S."/>
            <person name="Hume D.A."/>
            <person name="Kai C."/>
            <person name="Sasaki D."/>
            <person name="Tomaru Y."/>
            <person name="Fukuda S."/>
            <person name="Kanamori-Katayama M."/>
            <person name="Suzuki M."/>
            <person name="Aoki J."/>
            <person name="Arakawa T."/>
            <person name="Iida J."/>
            <person name="Imamura K."/>
            <person name="Itoh M."/>
            <person name="Kato T."/>
            <person name="Kawaji H."/>
            <person name="Kawagashira N."/>
            <person name="Kawashima T."/>
            <person name="Kojima M."/>
            <person name="Kondo S."/>
            <person name="Konno H."/>
            <person name="Nakano K."/>
            <person name="Ninomiya N."/>
            <person name="Nishio T."/>
            <person name="Okada M."/>
            <person name="Plessy C."/>
            <person name="Shibata K."/>
            <person name="Shiraki T."/>
            <person name="Suzuki S."/>
            <person name="Tagami M."/>
            <person name="Waki K."/>
            <person name="Watahiki A."/>
            <person name="Okamura-Oho Y."/>
            <person name="Suzuki H."/>
            <person name="Kawai J."/>
            <person name="Hayashizaki Y."/>
        </authorList>
    </citation>
    <scope>NUCLEOTIDE SEQUENCE [LARGE SCALE MRNA] (ISOFORM 1)</scope>
    <source>
        <strain>C57BL/6J</strain>
        <strain>NOD</strain>
        <tissue>Bone marrow</tissue>
        <tissue>Heart</tissue>
        <tissue>Oviduct</tissue>
        <tissue>Testis</tissue>
        <tissue>Visual cortex</tissue>
    </source>
</reference>
<reference key="2">
    <citation type="submission" date="2005-07" db="EMBL/GenBank/DDBJ databases">
        <title>Cloning of mouse full open reading frames in Gateway(R) system entry vector (pDONR201).</title>
        <authorList>
            <person name="Ebert L."/>
            <person name="Muenstermann E."/>
            <person name="Schatten R."/>
            <person name="Henze S."/>
            <person name="Bohn E."/>
            <person name="Mollenhauer J."/>
            <person name="Wiemann S."/>
            <person name="Schick M."/>
            <person name="Korn B."/>
        </authorList>
    </citation>
    <scope>NUCLEOTIDE SEQUENCE [LARGE SCALE MRNA] (ISOFORM 1)</scope>
</reference>
<reference key="3">
    <citation type="journal article" date="2004" name="Genome Res.">
        <title>The status, quality, and expansion of the NIH full-length cDNA project: the Mammalian Gene Collection (MGC).</title>
        <authorList>
            <consortium name="The MGC Project Team"/>
        </authorList>
    </citation>
    <scope>NUCLEOTIDE SEQUENCE [LARGE SCALE MRNA] (ISOFORMS 1 AND 2)</scope>
    <source>
        <strain>Czech II</strain>
        <strain>FVB/N</strain>
        <tissue>Mammary tumor</tissue>
    </source>
</reference>
<reference key="4">
    <citation type="submission" date="2009-01" db="UniProtKB">
        <authorList>
            <person name="Lubec G."/>
            <person name="Klug S."/>
            <person name="Sunyer B."/>
            <person name="Chen W.-Q."/>
        </authorList>
    </citation>
    <scope>PROTEIN SEQUENCE OF 69-89; 288-308; 314-334 AND 355-346</scope>
    <scope>IDENTIFICATION BY MASS SPECTROMETRY</scope>
    <source>
        <strain>OF1</strain>
        <tissue>Hippocampus</tissue>
    </source>
</reference>
<reference key="5">
    <citation type="journal article" date="2010" name="Cell">
        <title>A tissue-specific atlas of mouse protein phosphorylation and expression.</title>
        <authorList>
            <person name="Huttlin E.L."/>
            <person name="Jedrychowski M.P."/>
            <person name="Elias J.E."/>
            <person name="Goswami T."/>
            <person name="Rad R."/>
            <person name="Beausoleil S.A."/>
            <person name="Villen J."/>
            <person name="Haas W."/>
            <person name="Sowa M.E."/>
            <person name="Gygi S.P."/>
        </authorList>
    </citation>
    <scope>PHOSPHORYLATION [LARGE SCALE ANALYSIS] AT SER-82</scope>
    <scope>IDENTIFICATION BY MASS SPECTROMETRY [LARGE SCALE ANALYSIS]</scope>
    <source>
        <tissue>Brain</tissue>
        <tissue>Brown adipose tissue</tissue>
        <tissue>Heart</tissue>
        <tissue>Kidney</tissue>
        <tissue>Liver</tissue>
        <tissue>Lung</tissue>
        <tissue>Pancreas</tissue>
        <tissue>Spleen</tissue>
        <tissue>Testis</tissue>
    </source>
</reference>
<reference key="6">
    <citation type="journal article" date="2013" name="Proc. Natl. Acad. Sci. U.S.A.">
        <title>Label-free quantitative proteomics of the lysine acetylome in mitochondria identifies substrates of SIRT3 in metabolic pathways.</title>
        <authorList>
            <person name="Rardin M.J."/>
            <person name="Newman J.C."/>
            <person name="Held J.M."/>
            <person name="Cusack M.P."/>
            <person name="Sorensen D.J."/>
            <person name="Li B."/>
            <person name="Schilling B."/>
            <person name="Mooney S.D."/>
            <person name="Kahn C.R."/>
            <person name="Verdin E."/>
            <person name="Gibson B.W."/>
        </authorList>
    </citation>
    <scope>ACETYLATION [LARGE SCALE ANALYSIS] AT LYS-155; LYS-268; LYS-273; LYS-274; LYS-278 AND LYS-308</scope>
    <scope>IDENTIFICATION BY MASS SPECTROMETRY [LARGE SCALE ANALYSIS]</scope>
    <source>
        <tissue>Liver</tissue>
    </source>
</reference>
<reference key="7">
    <citation type="journal article" date="2023" name="Open Biol.">
        <title>MRPS36 provides a structural link in the eukaryotic 2-oxoglutarate dehydrogenase complex.</title>
        <authorList>
            <person name="Hevler J.F."/>
            <person name="Albanese P."/>
            <person name="Cabrera-Orefice A."/>
            <person name="Potter A."/>
            <person name="Jankevics A."/>
            <person name="Misic J."/>
            <person name="Scheltema R.A."/>
            <person name="Brandt U."/>
            <person name="Arnold S."/>
            <person name="Heck A.J.R."/>
        </authorList>
    </citation>
    <scope>SUBCELLULAR LOCATION</scope>
    <scope>SUBUNIT</scope>
</reference>
<proteinExistence type="evidence at protein level"/>
<name>ODO2_MOUSE</name>
<protein>
    <recommendedName>
        <fullName evidence="9">Dihydrolipoyllysine-residue succinyltransferase component of 2-oxoglutarate dehydrogenase complex, mitochondrial</fullName>
        <ecNumber evidence="3">2.3.1.61</ecNumber>
    </recommendedName>
    <alternativeName>
        <fullName>2-oxoglutarate dehydrogenase complex component E2</fullName>
        <shortName>OGDC-E2</shortName>
    </alternativeName>
    <alternativeName>
        <fullName>Dihydrolipoamide succinyltransferase component of 2-oxoglutarate dehydrogenase complex</fullName>
    </alternativeName>
    <alternativeName>
        <fullName>E2K</fullName>
    </alternativeName>
</protein>
<organism>
    <name type="scientific">Mus musculus</name>
    <name type="common">Mouse</name>
    <dbReference type="NCBI Taxonomy" id="10090"/>
    <lineage>
        <taxon>Eukaryota</taxon>
        <taxon>Metazoa</taxon>
        <taxon>Chordata</taxon>
        <taxon>Craniata</taxon>
        <taxon>Vertebrata</taxon>
        <taxon>Euteleostomi</taxon>
        <taxon>Mammalia</taxon>
        <taxon>Eutheria</taxon>
        <taxon>Euarchontoglires</taxon>
        <taxon>Glires</taxon>
        <taxon>Rodentia</taxon>
        <taxon>Myomorpha</taxon>
        <taxon>Muroidea</taxon>
        <taxon>Muridae</taxon>
        <taxon>Murinae</taxon>
        <taxon>Mus</taxon>
        <taxon>Mus</taxon>
    </lineage>
</organism>